<accession>P92492</accession>
<proteinExistence type="inferred from homology"/>
<feature type="chain" id="PRO_0000117879" description="NADH-ubiquinone oxidoreductase chain 4">
    <location>
        <begin position="1" status="less than"/>
        <end position="231" status="greater than"/>
    </location>
</feature>
<feature type="transmembrane region" description="Helical" evidence="2">
    <location>
        <begin position="1"/>
        <end position="21"/>
    </location>
</feature>
<feature type="transmembrane region" description="Helical" evidence="2">
    <location>
        <begin position="34"/>
        <end position="54"/>
    </location>
</feature>
<feature type="transmembrane region" description="Helical" evidence="2">
    <location>
        <begin position="63"/>
        <end position="85"/>
    </location>
</feature>
<feature type="transmembrane region" description="Helical" evidence="2">
    <location>
        <begin position="89"/>
        <end position="111"/>
    </location>
</feature>
<feature type="transmembrane region" description="Helical" evidence="2">
    <location>
        <begin position="128"/>
        <end position="148"/>
    </location>
</feature>
<feature type="transmembrane region" description="Helical" evidence="2">
    <location>
        <begin position="156"/>
        <end position="176"/>
    </location>
</feature>
<feature type="non-terminal residue">
    <location>
        <position position="1"/>
    </location>
</feature>
<feature type="non-terminal residue">
    <location>
        <position position="231"/>
    </location>
</feature>
<organism>
    <name type="scientific">Agkistrodon contortrix contortrix</name>
    <name type="common">Southern copperhead</name>
    <dbReference type="NCBI Taxonomy" id="8713"/>
    <lineage>
        <taxon>Eukaryota</taxon>
        <taxon>Metazoa</taxon>
        <taxon>Chordata</taxon>
        <taxon>Craniata</taxon>
        <taxon>Vertebrata</taxon>
        <taxon>Euteleostomi</taxon>
        <taxon>Lepidosauria</taxon>
        <taxon>Squamata</taxon>
        <taxon>Bifurcata</taxon>
        <taxon>Unidentata</taxon>
        <taxon>Episquamata</taxon>
        <taxon>Toxicofera</taxon>
        <taxon>Serpentes</taxon>
        <taxon>Colubroidea</taxon>
        <taxon>Viperidae</taxon>
        <taxon>Crotalinae</taxon>
        <taxon>Agkistrodon</taxon>
    </lineage>
</organism>
<name>NU4M_AGKCO</name>
<comment type="function">
    <text evidence="1">Core subunit of the mitochondrial membrane respiratory chain NADH dehydrogenase (Complex I) that is believed to belong to the minimal assembly required for catalysis. Complex I functions in the transfer of electrons from NADH to the respiratory chain. The immediate electron acceptor for the enzyme is believed to be ubiquinone (By similarity).</text>
</comment>
<comment type="catalytic activity">
    <reaction>
        <text>a ubiquinone + NADH + 5 H(+)(in) = a ubiquinol + NAD(+) + 4 H(+)(out)</text>
        <dbReference type="Rhea" id="RHEA:29091"/>
        <dbReference type="Rhea" id="RHEA-COMP:9565"/>
        <dbReference type="Rhea" id="RHEA-COMP:9566"/>
        <dbReference type="ChEBI" id="CHEBI:15378"/>
        <dbReference type="ChEBI" id="CHEBI:16389"/>
        <dbReference type="ChEBI" id="CHEBI:17976"/>
        <dbReference type="ChEBI" id="CHEBI:57540"/>
        <dbReference type="ChEBI" id="CHEBI:57945"/>
        <dbReference type="EC" id="7.1.1.2"/>
    </reaction>
</comment>
<comment type="subcellular location">
    <subcellularLocation>
        <location evidence="1">Mitochondrion membrane</location>
        <topology evidence="1">Multi-pass membrane protein</topology>
    </subcellularLocation>
</comment>
<comment type="similarity">
    <text evidence="3">Belongs to the complex I subunit 4 family.</text>
</comment>
<geneLocation type="mitochondrion"/>
<protein>
    <recommendedName>
        <fullName>NADH-ubiquinone oxidoreductase chain 4</fullName>
        <ecNumber>7.1.1.2</ecNumber>
    </recommendedName>
    <alternativeName>
        <fullName>NADH dehydrogenase subunit 4</fullName>
    </alternativeName>
</protein>
<dbReference type="EC" id="7.1.1.2"/>
<dbReference type="EMBL" id="U41868">
    <property type="protein sequence ID" value="AAB46628.1"/>
    <property type="molecule type" value="Genomic_DNA"/>
</dbReference>
<dbReference type="SMR" id="P92492"/>
<dbReference type="GO" id="GO:0031966">
    <property type="term" value="C:mitochondrial membrane"/>
    <property type="evidence" value="ECO:0007669"/>
    <property type="project" value="UniProtKB-SubCell"/>
</dbReference>
<dbReference type="GO" id="GO:0008137">
    <property type="term" value="F:NADH dehydrogenase (ubiquinone) activity"/>
    <property type="evidence" value="ECO:0007669"/>
    <property type="project" value="UniProtKB-EC"/>
</dbReference>
<dbReference type="GO" id="GO:0048039">
    <property type="term" value="F:ubiquinone binding"/>
    <property type="evidence" value="ECO:0007669"/>
    <property type="project" value="TreeGrafter"/>
</dbReference>
<dbReference type="GO" id="GO:0042773">
    <property type="term" value="P:ATP synthesis coupled electron transport"/>
    <property type="evidence" value="ECO:0007669"/>
    <property type="project" value="InterPro"/>
</dbReference>
<dbReference type="GO" id="GO:0015990">
    <property type="term" value="P:electron transport coupled proton transport"/>
    <property type="evidence" value="ECO:0007669"/>
    <property type="project" value="TreeGrafter"/>
</dbReference>
<dbReference type="InterPro" id="IPR003918">
    <property type="entry name" value="NADH_UbQ_OxRdtase"/>
</dbReference>
<dbReference type="InterPro" id="IPR001750">
    <property type="entry name" value="ND/Mrp_TM"/>
</dbReference>
<dbReference type="PANTHER" id="PTHR43507">
    <property type="entry name" value="NADH-UBIQUINONE OXIDOREDUCTASE CHAIN 4"/>
    <property type="match status" value="1"/>
</dbReference>
<dbReference type="PANTHER" id="PTHR43507:SF20">
    <property type="entry name" value="NADH-UBIQUINONE OXIDOREDUCTASE CHAIN 4"/>
    <property type="match status" value="1"/>
</dbReference>
<dbReference type="Pfam" id="PF00361">
    <property type="entry name" value="Proton_antipo_M"/>
    <property type="match status" value="1"/>
</dbReference>
<keyword id="KW-0249">Electron transport</keyword>
<keyword id="KW-0472">Membrane</keyword>
<keyword id="KW-0496">Mitochondrion</keyword>
<keyword id="KW-0520">NAD</keyword>
<keyword id="KW-0679">Respiratory chain</keyword>
<keyword id="KW-1278">Translocase</keyword>
<keyword id="KW-0812">Transmembrane</keyword>
<keyword id="KW-1133">Transmembrane helix</keyword>
<keyword id="KW-0813">Transport</keyword>
<keyword id="KW-0830">Ubiquinone</keyword>
<gene>
    <name type="primary">MT-ND4</name>
    <name type="synonym">MTND4</name>
    <name type="synonym">NADH4</name>
    <name type="synonym">ND4</name>
</gene>
<evidence type="ECO:0000250" key="1"/>
<evidence type="ECO:0000255" key="2"/>
<evidence type="ECO:0000305" key="3"/>
<sequence length="231" mass="25465">PIAGSMVLAAILLKLGGYGIIRMMQILPTTKTDMFLPFVVLALWGAILANLTCLQQTDLKSLIAYSSISHMGLVVAAIIIQTPWGLSGAMALMIAHGFTSSALFCLANTTYERTHTRILILTRGLHNILPMATTWWLLTNLMNIAVPPTMNFTGELLIMSALFNWCPTTIIMLGLSMLITASYSLHMFLSTQMGPTLLNNQTEPTHSREHLLMILHLIPLMMISMKPELVI</sequence>
<reference key="1">
    <citation type="journal article" date="1996" name="Copeia">
        <title>Crotaline intergeneric relationships based on mitochondrial DNA sequence data.</title>
        <authorList>
            <person name="Kraus F."/>
            <person name="Mink D.G."/>
            <person name="Brown W.M."/>
        </authorList>
    </citation>
    <scope>NUCLEOTIDE SEQUENCE [GENOMIC DNA]</scope>
</reference>